<dbReference type="EC" id="3.1.-.-" evidence="1"/>
<dbReference type="EMBL" id="AP009324">
    <property type="protein sequence ID" value="BAF77844.1"/>
    <property type="molecule type" value="Genomic_DNA"/>
</dbReference>
<dbReference type="RefSeq" id="WP_000172350.1">
    <property type="nucleotide sequence ID" value="NC_009782.1"/>
</dbReference>
<dbReference type="SMR" id="A7X0I1"/>
<dbReference type="KEGG" id="saw:SAHV_0961"/>
<dbReference type="HOGENOM" id="CLU_007838_0_0_9"/>
<dbReference type="GO" id="GO:0051539">
    <property type="term" value="F:4 iron, 4 sulfur cluster binding"/>
    <property type="evidence" value="ECO:0007669"/>
    <property type="project" value="UniProtKB-KW"/>
</dbReference>
<dbReference type="GO" id="GO:0008409">
    <property type="term" value="F:5'-3' exonuclease activity"/>
    <property type="evidence" value="ECO:0007669"/>
    <property type="project" value="UniProtKB-UniRule"/>
</dbReference>
<dbReference type="GO" id="GO:0005524">
    <property type="term" value="F:ATP binding"/>
    <property type="evidence" value="ECO:0007669"/>
    <property type="project" value="UniProtKB-UniRule"/>
</dbReference>
<dbReference type="GO" id="GO:0003690">
    <property type="term" value="F:double-stranded DNA binding"/>
    <property type="evidence" value="ECO:0007669"/>
    <property type="project" value="UniProtKB-UniRule"/>
</dbReference>
<dbReference type="GO" id="GO:0004386">
    <property type="term" value="F:helicase activity"/>
    <property type="evidence" value="ECO:0007669"/>
    <property type="project" value="UniProtKB-KW"/>
</dbReference>
<dbReference type="GO" id="GO:0046872">
    <property type="term" value="F:metal ion binding"/>
    <property type="evidence" value="ECO:0007669"/>
    <property type="project" value="UniProtKB-KW"/>
</dbReference>
<dbReference type="GO" id="GO:0000724">
    <property type="term" value="P:double-strand break repair via homologous recombination"/>
    <property type="evidence" value="ECO:0007669"/>
    <property type="project" value="UniProtKB-UniRule"/>
</dbReference>
<dbReference type="Gene3D" id="3.90.320.10">
    <property type="match status" value="1"/>
</dbReference>
<dbReference type="Gene3D" id="3.40.50.300">
    <property type="entry name" value="P-loop containing nucleotide triphosphate hydrolases"/>
    <property type="match status" value="4"/>
</dbReference>
<dbReference type="HAMAP" id="MF_01452">
    <property type="entry name" value="AddB_type1"/>
    <property type="match status" value="1"/>
</dbReference>
<dbReference type="InterPro" id="IPR049035">
    <property type="entry name" value="ADDB_N"/>
</dbReference>
<dbReference type="InterPro" id="IPR014140">
    <property type="entry name" value="DNA_helicase_suAddB"/>
</dbReference>
<dbReference type="InterPro" id="IPR014017">
    <property type="entry name" value="DNA_helicase_UvrD-like_C"/>
</dbReference>
<dbReference type="InterPro" id="IPR027417">
    <property type="entry name" value="P-loop_NTPase"/>
</dbReference>
<dbReference type="InterPro" id="IPR011604">
    <property type="entry name" value="PDDEXK-like_dom_sf"/>
</dbReference>
<dbReference type="InterPro" id="IPR038726">
    <property type="entry name" value="PDDEXK_AddAB-type"/>
</dbReference>
<dbReference type="NCBIfam" id="TIGR02773">
    <property type="entry name" value="addB_Gpos"/>
    <property type="match status" value="1"/>
</dbReference>
<dbReference type="PANTHER" id="PTHR30591">
    <property type="entry name" value="RECBCD ENZYME SUBUNIT RECC"/>
    <property type="match status" value="1"/>
</dbReference>
<dbReference type="PANTHER" id="PTHR30591:SF1">
    <property type="entry name" value="RECBCD ENZYME SUBUNIT RECC"/>
    <property type="match status" value="1"/>
</dbReference>
<dbReference type="Pfam" id="PF21445">
    <property type="entry name" value="ADDB_N"/>
    <property type="match status" value="1"/>
</dbReference>
<dbReference type="Pfam" id="PF12705">
    <property type="entry name" value="PDDEXK_1"/>
    <property type="match status" value="1"/>
</dbReference>
<dbReference type="Pfam" id="PF13361">
    <property type="entry name" value="UvrD_C"/>
    <property type="match status" value="1"/>
</dbReference>
<dbReference type="SUPFAM" id="SSF52540">
    <property type="entry name" value="P-loop containing nucleoside triphosphate hydrolases"/>
    <property type="match status" value="1"/>
</dbReference>
<dbReference type="PROSITE" id="PS51198">
    <property type="entry name" value="UVRD_HELICASE_ATP_BIND"/>
    <property type="match status" value="1"/>
</dbReference>
<dbReference type="PROSITE" id="PS51217">
    <property type="entry name" value="UVRD_HELICASE_CTER"/>
    <property type="match status" value="1"/>
</dbReference>
<protein>
    <recommendedName>
        <fullName evidence="1">ATP-dependent helicase/deoxyribonuclease subunit B</fullName>
        <ecNumber evidence="1">3.1.-.-</ecNumber>
    </recommendedName>
    <alternativeName>
        <fullName evidence="1">ATP-dependent helicase/nuclease subunit AddB</fullName>
    </alternativeName>
</protein>
<accession>A7X0I1</accession>
<comment type="function">
    <text evidence="1">The heterodimer acts as both an ATP-dependent DNA helicase and an ATP-dependent, dual-direction single-stranded exonuclease. Recognizes the chi site generating a DNA molecule suitable for the initiation of homologous recombination. The AddB subunit has 5' -&gt; 3' nuclease activity but not helicase activity.</text>
</comment>
<comment type="cofactor">
    <cofactor evidence="1">
        <name>Mg(2+)</name>
        <dbReference type="ChEBI" id="CHEBI:18420"/>
    </cofactor>
</comment>
<comment type="cofactor">
    <cofactor evidence="1">
        <name>[4Fe-4S] cluster</name>
        <dbReference type="ChEBI" id="CHEBI:49883"/>
    </cofactor>
    <text evidence="1">Binds 1 [4Fe-4S] cluster.</text>
</comment>
<comment type="subunit">
    <text evidence="1">Heterodimer of AddA and AddB.</text>
</comment>
<comment type="miscellaneous">
    <text evidence="1">Despite having conserved helicase domains, this subunit does not have helicase activity.</text>
</comment>
<comment type="similarity">
    <text evidence="1">Belongs to the helicase family. AddB/RexB type 1 subfamily.</text>
</comment>
<keyword id="KW-0004">4Fe-4S</keyword>
<keyword id="KW-0067">ATP-binding</keyword>
<keyword id="KW-0227">DNA damage</keyword>
<keyword id="KW-0234">DNA repair</keyword>
<keyword id="KW-0238">DNA-binding</keyword>
<keyword id="KW-0269">Exonuclease</keyword>
<keyword id="KW-0347">Helicase</keyword>
<keyword id="KW-0378">Hydrolase</keyword>
<keyword id="KW-0408">Iron</keyword>
<keyword id="KW-0411">Iron-sulfur</keyword>
<keyword id="KW-0479">Metal-binding</keyword>
<keyword id="KW-0540">Nuclease</keyword>
<keyword id="KW-0547">Nucleotide-binding</keyword>
<feature type="chain" id="PRO_0000379210" description="ATP-dependent helicase/deoxyribonuclease subunit B">
    <location>
        <begin position="1"/>
        <end position="1157"/>
    </location>
</feature>
<feature type="domain" description="UvrD-like helicase ATP-binding" evidence="1">
    <location>
        <begin position="1"/>
        <end position="275"/>
    </location>
</feature>
<feature type="domain" description="UvrD-like helicase C-terminal" evidence="1">
    <location>
        <begin position="269"/>
        <end position="583"/>
    </location>
</feature>
<feature type="binding site" evidence="1">
    <location>
        <begin position="8"/>
        <end position="15"/>
    </location>
    <ligand>
        <name>ATP</name>
        <dbReference type="ChEBI" id="CHEBI:30616"/>
    </ligand>
</feature>
<feature type="binding site" evidence="1">
    <location>
        <position position="784"/>
    </location>
    <ligand>
        <name>[4Fe-4S] cluster</name>
        <dbReference type="ChEBI" id="CHEBI:49883"/>
    </ligand>
</feature>
<feature type="binding site" evidence="1">
    <location>
        <position position="1112"/>
    </location>
    <ligand>
        <name>[4Fe-4S] cluster</name>
        <dbReference type="ChEBI" id="CHEBI:49883"/>
    </ligand>
</feature>
<feature type="binding site" evidence="1">
    <location>
        <position position="1115"/>
    </location>
    <ligand>
        <name>[4Fe-4S] cluster</name>
        <dbReference type="ChEBI" id="CHEBI:49883"/>
    </ligand>
</feature>
<feature type="binding site" evidence="1">
    <location>
        <position position="1121"/>
    </location>
    <ligand>
        <name>[4Fe-4S] cluster</name>
        <dbReference type="ChEBI" id="CHEBI:49883"/>
    </ligand>
</feature>
<gene>
    <name evidence="1" type="primary">addB</name>
    <name type="ordered locus">SAHV_0961</name>
</gene>
<name>ADDB_STAA1</name>
<reference key="1">
    <citation type="journal article" date="2008" name="Antimicrob. Agents Chemother.">
        <title>Mutated response regulator graR is responsible for phenotypic conversion of Staphylococcus aureus from heterogeneous vancomycin-intermediate resistance to vancomycin-intermediate resistance.</title>
        <authorList>
            <person name="Neoh H.-M."/>
            <person name="Cui L."/>
            <person name="Yuzawa H."/>
            <person name="Takeuchi F."/>
            <person name="Matsuo M."/>
            <person name="Hiramatsu K."/>
        </authorList>
    </citation>
    <scope>NUCLEOTIDE SEQUENCE [LARGE SCALE GENOMIC DNA]</scope>
    <source>
        <strain>Mu3 / ATCC 700698</strain>
    </source>
</reference>
<evidence type="ECO:0000255" key="1">
    <source>
        <dbReference type="HAMAP-Rule" id="MF_01452"/>
    </source>
</evidence>
<proteinExistence type="inferred from homology"/>
<sequence length="1157" mass="134357">MTLHAYLGRAGTGKSTKMLTEIKQKMKADPLGDPIILIAPTQSTFQLEQAFVNDPELNGSLRTEVLHFERLSHRIFQEVGSYSEQKLSKAATEMMIYNIVQEQQKYLKLYQSQAKYYGFSEKLTEQIQDFKKYAVTPEHLEHFIADKNMQTRTKNKLEDIALIYREFEQRIQNEFITGEDSLQYFIDCMPKSEWLKRADIYIDGFHNFSTIEYLIIKGLIKYAKSVTIILTTDGNHDQFSLFRKPSEVLRHIEEIANELNISIERQYFNQLYRFNNQDLKHLEQEFDVLQINRVACQGHINILESATMREEINEIARRIIVDIRDKQLRYQDIAILYRDESYAYLFDSILPLYNIPYNIDTKRSMTHHPVMEMIRSLIEVIQSNWQVNPMLRLLKTDVLTASYLKSAYLVDLLENFVLERGIYGKRWLDDELFNVEHFSKMGRKAHKLTEDERNTFEQVVKLKKDVIDKILHFEKQMSQAETVKDFATAFYESMEYFELPNQLMTERDELDLNGNHEKAEEIDQIWNGLIQILDDLVLVFGDEPMSMERFLEVFDIGLEQLEFVMIPQTLDQVSIGTMDLAKVDNKQHVYLVGMNDGTMPQPVTASSLITDEEKKYFEQQANVELSPTSDILQMDEAFVCYVAMTRAKGDVTFSYSLMGSSGDDKEISPFLNQIQSLFNQLEITNIPQYHEVNPLSLMQHAKQTKITLFEALRAWLDDEIVADSWLDAYQVIRDSDHLNQGLDYLMSALTFDNETVKLGETLSKDLYGKEINASVSRFEGYQQCPFKHYASHGLKLNERTKYELQNFDLGDIFHSVLKYISERINGDFKQLDLKKIRQLTNEALEEILPKVQFNLLNSSAYYRYLSRRIGAIVETTLSALKYQGTYSKFMPKHFETSFRRKPRTNDELIAQTLTTTQGIPINIRGQIDRIDTYTKNDTSFVNIIDYKSSEGSATLDLTKVYYGMQMQMMTYMDIVLQNKQRLGLTDIVKPGGLLYFHVHEPRIKFKSWSDIDEDKLEQDLIKKFKLSGLVNADQTVIDALDIRLEPKFTSDIVPVGLNKDGSLSKRGSQVADEATIYKFIQHNKENFIETASNIMDGHTEVAPLKYKQKLPCAFCSYQSVCHVDGMIDSKRYRTVDETINPIEAIQNININDEFGGE</sequence>
<organism>
    <name type="scientific">Staphylococcus aureus (strain Mu3 / ATCC 700698)</name>
    <dbReference type="NCBI Taxonomy" id="418127"/>
    <lineage>
        <taxon>Bacteria</taxon>
        <taxon>Bacillati</taxon>
        <taxon>Bacillota</taxon>
        <taxon>Bacilli</taxon>
        <taxon>Bacillales</taxon>
        <taxon>Staphylococcaceae</taxon>
        <taxon>Staphylococcus</taxon>
    </lineage>
</organism>